<accession>Q3SSX0</accession>
<dbReference type="EMBL" id="CP000115">
    <property type="protein sequence ID" value="ABA04621.1"/>
    <property type="molecule type" value="Genomic_DNA"/>
</dbReference>
<dbReference type="RefSeq" id="WP_011314638.1">
    <property type="nucleotide sequence ID" value="NC_007406.1"/>
</dbReference>
<dbReference type="SMR" id="Q3SSX0"/>
<dbReference type="STRING" id="323098.Nwi_1360"/>
<dbReference type="KEGG" id="nwi:Nwi_1360"/>
<dbReference type="eggNOG" id="COG0049">
    <property type="taxonomic scope" value="Bacteria"/>
</dbReference>
<dbReference type="HOGENOM" id="CLU_072226_1_1_5"/>
<dbReference type="OrthoDB" id="9807653at2"/>
<dbReference type="Proteomes" id="UP000002531">
    <property type="component" value="Chromosome"/>
</dbReference>
<dbReference type="GO" id="GO:0015935">
    <property type="term" value="C:small ribosomal subunit"/>
    <property type="evidence" value="ECO:0007669"/>
    <property type="project" value="InterPro"/>
</dbReference>
<dbReference type="GO" id="GO:0019843">
    <property type="term" value="F:rRNA binding"/>
    <property type="evidence" value="ECO:0007669"/>
    <property type="project" value="UniProtKB-UniRule"/>
</dbReference>
<dbReference type="GO" id="GO:0003735">
    <property type="term" value="F:structural constituent of ribosome"/>
    <property type="evidence" value="ECO:0007669"/>
    <property type="project" value="InterPro"/>
</dbReference>
<dbReference type="GO" id="GO:0000049">
    <property type="term" value="F:tRNA binding"/>
    <property type="evidence" value="ECO:0007669"/>
    <property type="project" value="UniProtKB-UniRule"/>
</dbReference>
<dbReference type="GO" id="GO:0006412">
    <property type="term" value="P:translation"/>
    <property type="evidence" value="ECO:0007669"/>
    <property type="project" value="UniProtKB-UniRule"/>
</dbReference>
<dbReference type="CDD" id="cd14869">
    <property type="entry name" value="uS7_Bacteria"/>
    <property type="match status" value="1"/>
</dbReference>
<dbReference type="FunFam" id="1.10.455.10:FF:000001">
    <property type="entry name" value="30S ribosomal protein S7"/>
    <property type="match status" value="1"/>
</dbReference>
<dbReference type="Gene3D" id="1.10.455.10">
    <property type="entry name" value="Ribosomal protein S7 domain"/>
    <property type="match status" value="1"/>
</dbReference>
<dbReference type="HAMAP" id="MF_00480_B">
    <property type="entry name" value="Ribosomal_uS7_B"/>
    <property type="match status" value="1"/>
</dbReference>
<dbReference type="InterPro" id="IPR000235">
    <property type="entry name" value="Ribosomal_uS7"/>
</dbReference>
<dbReference type="InterPro" id="IPR005717">
    <property type="entry name" value="Ribosomal_uS7_bac/org-type"/>
</dbReference>
<dbReference type="InterPro" id="IPR020606">
    <property type="entry name" value="Ribosomal_uS7_CS"/>
</dbReference>
<dbReference type="InterPro" id="IPR023798">
    <property type="entry name" value="Ribosomal_uS7_dom"/>
</dbReference>
<dbReference type="InterPro" id="IPR036823">
    <property type="entry name" value="Ribosomal_uS7_dom_sf"/>
</dbReference>
<dbReference type="NCBIfam" id="TIGR01029">
    <property type="entry name" value="rpsG_bact"/>
    <property type="match status" value="1"/>
</dbReference>
<dbReference type="PANTHER" id="PTHR11205">
    <property type="entry name" value="RIBOSOMAL PROTEIN S7"/>
    <property type="match status" value="1"/>
</dbReference>
<dbReference type="Pfam" id="PF00177">
    <property type="entry name" value="Ribosomal_S7"/>
    <property type="match status" value="1"/>
</dbReference>
<dbReference type="PIRSF" id="PIRSF002122">
    <property type="entry name" value="RPS7p_RPS7a_RPS5e_RPS7o"/>
    <property type="match status" value="1"/>
</dbReference>
<dbReference type="SUPFAM" id="SSF47973">
    <property type="entry name" value="Ribosomal protein S7"/>
    <property type="match status" value="1"/>
</dbReference>
<dbReference type="PROSITE" id="PS00052">
    <property type="entry name" value="RIBOSOMAL_S7"/>
    <property type="match status" value="1"/>
</dbReference>
<gene>
    <name evidence="1" type="primary">rpsG</name>
    <name type="ordered locus">Nwi_1360</name>
</gene>
<organism>
    <name type="scientific">Nitrobacter winogradskyi (strain ATCC 25391 / DSM 10237 / CIP 104748 / NCIMB 11846 / Nb-255)</name>
    <dbReference type="NCBI Taxonomy" id="323098"/>
    <lineage>
        <taxon>Bacteria</taxon>
        <taxon>Pseudomonadati</taxon>
        <taxon>Pseudomonadota</taxon>
        <taxon>Alphaproteobacteria</taxon>
        <taxon>Hyphomicrobiales</taxon>
        <taxon>Nitrobacteraceae</taxon>
        <taxon>Nitrobacter</taxon>
    </lineage>
</organism>
<sequence length="156" mass="17661">MSRRHSAEKREVLPDPKFGNVVITKFMNSIMYAGKKSVAESIVYGALDLIEAKTKQGPLTVFEQALENVMPTIEVRSRRVGGATYQVPVEVRSTRRQALGIRWLITAARGRNEKTMTERLSAELLDASNNRGSAVKKREDVHKMAEANRAFSHYRW</sequence>
<feature type="chain" id="PRO_0000226511" description="Small ribosomal subunit protein uS7">
    <location>
        <begin position="1"/>
        <end position="156"/>
    </location>
</feature>
<keyword id="KW-1185">Reference proteome</keyword>
<keyword id="KW-0687">Ribonucleoprotein</keyword>
<keyword id="KW-0689">Ribosomal protein</keyword>
<keyword id="KW-0694">RNA-binding</keyword>
<keyword id="KW-0699">rRNA-binding</keyword>
<keyword id="KW-0820">tRNA-binding</keyword>
<proteinExistence type="inferred from homology"/>
<comment type="function">
    <text evidence="1">One of the primary rRNA binding proteins, it binds directly to 16S rRNA where it nucleates assembly of the head domain of the 30S subunit. Is located at the subunit interface close to the decoding center, probably blocks exit of the E-site tRNA.</text>
</comment>
<comment type="subunit">
    <text evidence="1">Part of the 30S ribosomal subunit. Contacts proteins S9 and S11.</text>
</comment>
<comment type="similarity">
    <text evidence="1">Belongs to the universal ribosomal protein uS7 family.</text>
</comment>
<evidence type="ECO:0000255" key="1">
    <source>
        <dbReference type="HAMAP-Rule" id="MF_00480"/>
    </source>
</evidence>
<evidence type="ECO:0000305" key="2"/>
<name>RS7_NITWN</name>
<protein>
    <recommendedName>
        <fullName evidence="1">Small ribosomal subunit protein uS7</fullName>
    </recommendedName>
    <alternativeName>
        <fullName evidence="2">30S ribosomal protein S7</fullName>
    </alternativeName>
</protein>
<reference key="1">
    <citation type="journal article" date="2006" name="Appl. Environ. Microbiol.">
        <title>Genome sequence of the chemolithoautotrophic nitrite-oxidizing bacterium Nitrobacter winogradskyi Nb-255.</title>
        <authorList>
            <person name="Starkenburg S.R."/>
            <person name="Chain P.S.G."/>
            <person name="Sayavedra-Soto L.A."/>
            <person name="Hauser L."/>
            <person name="Land M.L."/>
            <person name="Larimer F.W."/>
            <person name="Malfatti S.A."/>
            <person name="Klotz M.G."/>
            <person name="Bottomley P.J."/>
            <person name="Arp D.J."/>
            <person name="Hickey W.J."/>
        </authorList>
    </citation>
    <scope>NUCLEOTIDE SEQUENCE [LARGE SCALE GENOMIC DNA]</scope>
    <source>
        <strain>ATCC 25391 / DSM 10237 / CIP 104748 / NCIMB 11846 / Nb-255</strain>
    </source>
</reference>